<evidence type="ECO:0000255" key="1">
    <source>
        <dbReference type="HAMAP-Rule" id="MF_01616"/>
    </source>
</evidence>
<gene>
    <name evidence="1" type="primary">mltC</name>
    <name type="ordered locus">ECIAI39_3387</name>
</gene>
<proteinExistence type="inferred from homology"/>
<name>MLTC_ECO7I</name>
<organism>
    <name type="scientific">Escherichia coli O7:K1 (strain IAI39 / ExPEC)</name>
    <dbReference type="NCBI Taxonomy" id="585057"/>
    <lineage>
        <taxon>Bacteria</taxon>
        <taxon>Pseudomonadati</taxon>
        <taxon>Pseudomonadota</taxon>
        <taxon>Gammaproteobacteria</taxon>
        <taxon>Enterobacterales</taxon>
        <taxon>Enterobacteriaceae</taxon>
        <taxon>Escherichia</taxon>
    </lineage>
</organism>
<sequence length="359" mass="40147">MKKYLALALIAPLLISCSTTKKGDTYNEAWVKDTNGFDILMGQFAHNIENFWGFKEVVIAGPKDYVKYTDQYQTRSHINFDDGTITIETIAGTEPAAHLRRAIIKTLLMGDDPSSVDLYSDVDDITISKEPFLYGQVVDNTGQPIRWEGRASNFADYLLKNRLKSRSNGLRIIYSVTINMVPNHLDKRAHKYLGMVRQASRKYGVDESLILAIMQTESSFNPYAVSRSDALGLMQVVQHTAGKDVFRSQGKSGTPSRSFLFDPASNIDTGTAYLAMLNNVYLGGIDNPTSRRYAVITAYNGGAGSVLRVFSNDKIQAANIINTMTPGDVYQTLTTRHPSAESRRYLYKVNTAQKSYRRR</sequence>
<keyword id="KW-0998">Cell outer membrane</keyword>
<keyword id="KW-0961">Cell wall biogenesis/degradation</keyword>
<keyword id="KW-0449">Lipoprotein</keyword>
<keyword id="KW-0456">Lyase</keyword>
<keyword id="KW-0472">Membrane</keyword>
<keyword id="KW-0564">Palmitate</keyword>
<keyword id="KW-0732">Signal</keyword>
<comment type="function">
    <text evidence="1">Murein-degrading enzyme. May play a role in recycling of muropeptides during cell elongation and/or cell division.</text>
</comment>
<comment type="catalytic activity">
    <reaction evidence="1">
        <text>Exolytic cleavage of the (1-&gt;4)-beta-glycosidic linkage between N-acetylmuramic acid (MurNAc) and N-acetylglucosamine (GlcNAc) residues in peptidoglycan, from either the reducing or the non-reducing ends of the peptidoglycan chains, with concomitant formation of a 1,6-anhydrobond in the MurNAc residue.</text>
        <dbReference type="EC" id="4.2.2.n1"/>
    </reaction>
</comment>
<comment type="subcellular location">
    <subcellularLocation>
        <location evidence="1">Cell outer membrane</location>
        <topology evidence="1">Lipid-anchor</topology>
    </subcellularLocation>
</comment>
<comment type="similarity">
    <text evidence="1">Belongs to the transglycosylase Slt family.</text>
</comment>
<reference key="1">
    <citation type="journal article" date="2009" name="PLoS Genet.">
        <title>Organised genome dynamics in the Escherichia coli species results in highly diverse adaptive paths.</title>
        <authorList>
            <person name="Touchon M."/>
            <person name="Hoede C."/>
            <person name="Tenaillon O."/>
            <person name="Barbe V."/>
            <person name="Baeriswyl S."/>
            <person name="Bidet P."/>
            <person name="Bingen E."/>
            <person name="Bonacorsi S."/>
            <person name="Bouchier C."/>
            <person name="Bouvet O."/>
            <person name="Calteau A."/>
            <person name="Chiapello H."/>
            <person name="Clermont O."/>
            <person name="Cruveiller S."/>
            <person name="Danchin A."/>
            <person name="Diard M."/>
            <person name="Dossat C."/>
            <person name="Karoui M.E."/>
            <person name="Frapy E."/>
            <person name="Garry L."/>
            <person name="Ghigo J.M."/>
            <person name="Gilles A.M."/>
            <person name="Johnson J."/>
            <person name="Le Bouguenec C."/>
            <person name="Lescat M."/>
            <person name="Mangenot S."/>
            <person name="Martinez-Jehanne V."/>
            <person name="Matic I."/>
            <person name="Nassif X."/>
            <person name="Oztas S."/>
            <person name="Petit M.A."/>
            <person name="Pichon C."/>
            <person name="Rouy Z."/>
            <person name="Ruf C.S."/>
            <person name="Schneider D."/>
            <person name="Tourret J."/>
            <person name="Vacherie B."/>
            <person name="Vallenet D."/>
            <person name="Medigue C."/>
            <person name="Rocha E.P.C."/>
            <person name="Denamur E."/>
        </authorList>
    </citation>
    <scope>NUCLEOTIDE SEQUENCE [LARGE SCALE GENOMIC DNA]</scope>
    <source>
        <strain>IAI39 / ExPEC</strain>
    </source>
</reference>
<accession>B7NI32</accession>
<feature type="signal peptide" evidence="1">
    <location>
        <begin position="1"/>
        <end position="16"/>
    </location>
</feature>
<feature type="chain" id="PRO_1000185921" description="Membrane-bound lytic murein transglycosylase C">
    <location>
        <begin position="17"/>
        <end position="359"/>
    </location>
</feature>
<feature type="lipid moiety-binding region" description="N-palmitoyl cysteine" evidence="1">
    <location>
        <position position="17"/>
    </location>
</feature>
<feature type="lipid moiety-binding region" description="S-diacylglycerol cysteine" evidence="1">
    <location>
        <position position="17"/>
    </location>
</feature>
<dbReference type="EC" id="4.2.2.n1" evidence="1"/>
<dbReference type="EMBL" id="CU928164">
    <property type="protein sequence ID" value="CAR19504.1"/>
    <property type="molecule type" value="Genomic_DNA"/>
</dbReference>
<dbReference type="RefSeq" id="WP_012602521.1">
    <property type="nucleotide sequence ID" value="NC_011750.1"/>
</dbReference>
<dbReference type="RefSeq" id="YP_002409306.1">
    <property type="nucleotide sequence ID" value="NC_011750.1"/>
</dbReference>
<dbReference type="SMR" id="B7NI32"/>
<dbReference type="STRING" id="585057.ECIAI39_3387"/>
<dbReference type="CAZy" id="GH23">
    <property type="family name" value="Glycoside Hydrolase Family 23"/>
</dbReference>
<dbReference type="KEGG" id="ect:ECIAI39_3387"/>
<dbReference type="PATRIC" id="fig|585057.6.peg.3516"/>
<dbReference type="HOGENOM" id="CLU_044583_0_0_6"/>
<dbReference type="Proteomes" id="UP000000749">
    <property type="component" value="Chromosome"/>
</dbReference>
<dbReference type="GO" id="GO:0009279">
    <property type="term" value="C:cell outer membrane"/>
    <property type="evidence" value="ECO:0007669"/>
    <property type="project" value="UniProtKB-SubCell"/>
</dbReference>
<dbReference type="GO" id="GO:0016798">
    <property type="term" value="F:hydrolase activity, acting on glycosyl bonds"/>
    <property type="evidence" value="ECO:0007669"/>
    <property type="project" value="InterPro"/>
</dbReference>
<dbReference type="GO" id="GO:0008933">
    <property type="term" value="F:peptidoglycan lytic transglycosylase activity"/>
    <property type="evidence" value="ECO:0007669"/>
    <property type="project" value="UniProtKB-UniRule"/>
</dbReference>
<dbReference type="GO" id="GO:0016998">
    <property type="term" value="P:cell wall macromolecule catabolic process"/>
    <property type="evidence" value="ECO:0007669"/>
    <property type="project" value="UniProtKB-UniRule"/>
</dbReference>
<dbReference type="GO" id="GO:0071555">
    <property type="term" value="P:cell wall organization"/>
    <property type="evidence" value="ECO:0007669"/>
    <property type="project" value="UniProtKB-KW"/>
</dbReference>
<dbReference type="GO" id="GO:0000270">
    <property type="term" value="P:peptidoglycan metabolic process"/>
    <property type="evidence" value="ECO:0007669"/>
    <property type="project" value="InterPro"/>
</dbReference>
<dbReference type="CDD" id="cd16893">
    <property type="entry name" value="LT_MltC_MltE"/>
    <property type="match status" value="1"/>
</dbReference>
<dbReference type="FunFam" id="1.10.530.10:FF:000002">
    <property type="entry name" value="Membrane-bound lytic murein transglycosylase C"/>
    <property type="match status" value="1"/>
</dbReference>
<dbReference type="Gene3D" id="1.10.530.10">
    <property type="match status" value="1"/>
</dbReference>
<dbReference type="HAMAP" id="MF_01616">
    <property type="entry name" value="MltC"/>
    <property type="match status" value="1"/>
</dbReference>
<dbReference type="InterPro" id="IPR023346">
    <property type="entry name" value="Lysozyme-like_dom_sf"/>
</dbReference>
<dbReference type="InterPro" id="IPR023664">
    <property type="entry name" value="Murein_transglycosylaseC"/>
</dbReference>
<dbReference type="InterPro" id="IPR024570">
    <property type="entry name" value="Murein_transglycosylaseC_N"/>
</dbReference>
<dbReference type="InterPro" id="IPR000189">
    <property type="entry name" value="Transglyc_AS"/>
</dbReference>
<dbReference type="InterPro" id="IPR008258">
    <property type="entry name" value="Transglycosylase_SLT_dom_1"/>
</dbReference>
<dbReference type="NCBIfam" id="NF008670">
    <property type="entry name" value="PRK11671.1"/>
    <property type="match status" value="1"/>
</dbReference>
<dbReference type="PANTHER" id="PTHR37423:SF2">
    <property type="entry name" value="MEMBRANE-BOUND LYTIC MUREIN TRANSGLYCOSYLASE C"/>
    <property type="match status" value="1"/>
</dbReference>
<dbReference type="PANTHER" id="PTHR37423">
    <property type="entry name" value="SOLUBLE LYTIC MUREIN TRANSGLYCOSYLASE-RELATED"/>
    <property type="match status" value="1"/>
</dbReference>
<dbReference type="Pfam" id="PF11873">
    <property type="entry name" value="Mltc_N"/>
    <property type="match status" value="1"/>
</dbReference>
<dbReference type="Pfam" id="PF01464">
    <property type="entry name" value="SLT"/>
    <property type="match status" value="1"/>
</dbReference>
<dbReference type="SUPFAM" id="SSF53955">
    <property type="entry name" value="Lysozyme-like"/>
    <property type="match status" value="1"/>
</dbReference>
<dbReference type="PROSITE" id="PS51257">
    <property type="entry name" value="PROKAR_LIPOPROTEIN"/>
    <property type="match status" value="1"/>
</dbReference>
<dbReference type="PROSITE" id="PS00922">
    <property type="entry name" value="TRANSGLYCOSYLASE"/>
    <property type="match status" value="1"/>
</dbReference>
<protein>
    <recommendedName>
        <fullName evidence="1">Membrane-bound lytic murein transglycosylase C</fullName>
        <ecNumber evidence="1">4.2.2.n1</ecNumber>
    </recommendedName>
    <alternativeName>
        <fullName evidence="1">Murein lyase C</fullName>
    </alternativeName>
</protein>